<reference key="1">
    <citation type="journal article" date="2006" name="Comp. Biochem. Physiol.">
        <title>Species-, sex-, and age-dependent urinary excretion of cauxin, a mammalian carboxylesterase.</title>
        <authorList>
            <person name="Miyazaki M."/>
            <person name="Yamashita T."/>
            <person name="Hosokawa M."/>
            <person name="Taira H."/>
            <person name="Suzuki A."/>
        </authorList>
    </citation>
    <scope>NUCLEOTIDE SEQUENCE [MRNA]</scope>
</reference>
<evidence type="ECO:0000250" key="1"/>
<evidence type="ECO:0000255" key="2"/>
<evidence type="ECO:0000255" key="3">
    <source>
        <dbReference type="PROSITE-ProRule" id="PRU10039"/>
    </source>
</evidence>
<evidence type="ECO:0000305" key="4"/>
<protein>
    <recommendedName>
        <fullName>Carboxylesterase 5A</fullName>
        <ecNumber>3.1.1.1</ecNumber>
    </recommendedName>
    <alternativeName>
        <fullName>Carboxylesterase-like urinary excreted protein homolog</fullName>
        <shortName>Cauxin</shortName>
    </alternativeName>
</protein>
<accession>Q6AW47</accession>
<gene>
    <name type="primary">CES5A</name>
    <name type="synonym">CES7</name>
</gene>
<sequence length="575" mass="63621">MSGEWGHLGQTLIWAVWVLAAATEGPAADAPVRSTRLGWVRGKQATVLGSTMPVNVFLGIPFAAPPLGPLRFKRPKPALLWNDSRDATSYPKLCLQNSVWLLSDQHFLKVHYPNLEVSEDCLYLNIYAPAHANTGSKLPVMVWFPGGAFETGSASIFDGSALAAYEDVLIVTTQYRLGIFGFFKTGDQHAPGNWAFLDQLAALTWVQENIEFFGGDPHSVTIFGESAGAISVSGLVLSPMASGLFHKAIMESGVAIIPFLRAPDDERNEDLQVIARICGCNVSDSVALLQCLRAKSSEELLDINKKTKSFTRVVDGFFFPDEPLDLLTEKTFNSIPSVIGVNNHECGFLLPMKEFPEILGGSNKSLALHLIHRVLHIPNQYLYLVADQYFYNKHSPVEIRDSFLDLLGDVFFVVPGVVTARYHRDAGAPVYFYEFQHPPECLKDTRPAFVKADHSDEIRFVFGGAFLKGNIVMFEGATEEEKLLSRKMMRYWANFARTGDPNGEGLPLWPAYSQSEQYLKLDLNISVGQKLKEQEVEFWSDTLPLIMSMSTAPPGPPVPLLSLSVLLPFLFSSAP</sequence>
<dbReference type="EC" id="3.1.1.1"/>
<dbReference type="EMBL" id="AB186392">
    <property type="protein sequence ID" value="BAD35015.1"/>
    <property type="molecule type" value="mRNA"/>
</dbReference>
<dbReference type="RefSeq" id="NP_001003969.1">
    <property type="nucleotide sequence ID" value="NM_001003969.1"/>
</dbReference>
<dbReference type="SMR" id="Q6AW47"/>
<dbReference type="FunCoup" id="Q6AW47">
    <property type="interactions" value="16"/>
</dbReference>
<dbReference type="STRING" id="9615.ENSCAFP00000056757"/>
<dbReference type="ESTHER" id="canfa-cauxin">
    <property type="family name" value="Carb_B_Chordata"/>
</dbReference>
<dbReference type="GlyCosmos" id="Q6AW47">
    <property type="glycosylation" value="4 sites, No reported glycans"/>
</dbReference>
<dbReference type="PaxDb" id="9612-ENSCAFP00000013718"/>
<dbReference type="GeneID" id="445456"/>
<dbReference type="KEGG" id="cfa:445456"/>
<dbReference type="CTD" id="221223"/>
<dbReference type="eggNOG" id="KOG1516">
    <property type="taxonomic scope" value="Eukaryota"/>
</dbReference>
<dbReference type="InParanoid" id="Q6AW47"/>
<dbReference type="OrthoDB" id="8119at33554"/>
<dbReference type="Proteomes" id="UP000002254">
    <property type="component" value="Unplaced"/>
</dbReference>
<dbReference type="Proteomes" id="UP000694429">
    <property type="component" value="Unplaced"/>
</dbReference>
<dbReference type="Proteomes" id="UP000694542">
    <property type="component" value="Unplaced"/>
</dbReference>
<dbReference type="Proteomes" id="UP000805418">
    <property type="component" value="Unplaced"/>
</dbReference>
<dbReference type="GO" id="GO:0005576">
    <property type="term" value="C:extracellular region"/>
    <property type="evidence" value="ECO:0007669"/>
    <property type="project" value="UniProtKB-SubCell"/>
</dbReference>
<dbReference type="GO" id="GO:0106435">
    <property type="term" value="F:carboxylesterase activity"/>
    <property type="evidence" value="ECO:0007669"/>
    <property type="project" value="UniProtKB-EC"/>
</dbReference>
<dbReference type="CDD" id="cd00312">
    <property type="entry name" value="Esterase_lipase"/>
    <property type="match status" value="1"/>
</dbReference>
<dbReference type="FunFam" id="3.40.50.1820:FF:000011">
    <property type="entry name" value="Carboxylic ester hydrolase"/>
    <property type="match status" value="1"/>
</dbReference>
<dbReference type="Gene3D" id="3.40.50.1820">
    <property type="entry name" value="alpha/beta hydrolase"/>
    <property type="match status" value="1"/>
</dbReference>
<dbReference type="InterPro" id="IPR029058">
    <property type="entry name" value="AB_hydrolase_fold"/>
</dbReference>
<dbReference type="InterPro" id="IPR002018">
    <property type="entry name" value="CarbesteraseB"/>
</dbReference>
<dbReference type="InterPro" id="IPR019826">
    <property type="entry name" value="Carboxylesterase_B_AS"/>
</dbReference>
<dbReference type="InterPro" id="IPR019819">
    <property type="entry name" value="Carboxylesterase_B_CS"/>
</dbReference>
<dbReference type="InterPro" id="IPR050309">
    <property type="entry name" value="Type-B_Carboxylest/Lipase"/>
</dbReference>
<dbReference type="PANTHER" id="PTHR11559">
    <property type="entry name" value="CARBOXYLESTERASE"/>
    <property type="match status" value="1"/>
</dbReference>
<dbReference type="Pfam" id="PF00135">
    <property type="entry name" value="COesterase"/>
    <property type="match status" value="1"/>
</dbReference>
<dbReference type="SUPFAM" id="SSF53474">
    <property type="entry name" value="alpha/beta-Hydrolases"/>
    <property type="match status" value="1"/>
</dbReference>
<dbReference type="PROSITE" id="PS00122">
    <property type="entry name" value="CARBOXYLESTERASE_B_1"/>
    <property type="match status" value="1"/>
</dbReference>
<dbReference type="PROSITE" id="PS00941">
    <property type="entry name" value="CARBOXYLESTERASE_B_2"/>
    <property type="match status" value="1"/>
</dbReference>
<feature type="signal peptide" evidence="2">
    <location>
        <begin position="1"/>
        <end position="27"/>
    </location>
</feature>
<feature type="chain" id="PRO_0000308589" description="Carboxylesterase 5A">
    <location>
        <begin position="28"/>
        <end position="575"/>
    </location>
</feature>
<feature type="active site" description="Acyl-ester intermediate" evidence="3">
    <location>
        <position position="226"/>
    </location>
</feature>
<feature type="active site" description="Charge relay system" evidence="1">
    <location>
        <position position="345"/>
    </location>
</feature>
<feature type="active site" description="Charge relay system" evidence="1">
    <location>
        <position position="454"/>
    </location>
</feature>
<feature type="glycosylation site" description="N-linked (GlcNAc...) asparagine" evidence="2">
    <location>
        <position position="82"/>
    </location>
</feature>
<feature type="glycosylation site" description="N-linked (GlcNAc...) asparagine" evidence="2">
    <location>
        <position position="281"/>
    </location>
</feature>
<feature type="glycosylation site" description="N-linked (GlcNAc...) asparagine" evidence="2">
    <location>
        <position position="363"/>
    </location>
</feature>
<feature type="glycosylation site" description="N-linked (GlcNAc...) asparagine" evidence="2">
    <location>
        <position position="524"/>
    </location>
</feature>
<feature type="disulfide bond" evidence="1">
    <location>
        <begin position="94"/>
        <end position="121"/>
    </location>
</feature>
<feature type="disulfide bond" evidence="1">
    <location>
        <begin position="280"/>
        <end position="291"/>
    </location>
</feature>
<keyword id="KW-1015">Disulfide bond</keyword>
<keyword id="KW-0325">Glycoprotein</keyword>
<keyword id="KW-0378">Hydrolase</keyword>
<keyword id="KW-1185">Reference proteome</keyword>
<keyword id="KW-0964">Secreted</keyword>
<keyword id="KW-0719">Serine esterase</keyword>
<keyword id="KW-0732">Signal</keyword>
<proteinExistence type="evidence at transcript level"/>
<organism>
    <name type="scientific">Canis lupus familiaris</name>
    <name type="common">Dog</name>
    <name type="synonym">Canis familiaris</name>
    <dbReference type="NCBI Taxonomy" id="9615"/>
    <lineage>
        <taxon>Eukaryota</taxon>
        <taxon>Metazoa</taxon>
        <taxon>Chordata</taxon>
        <taxon>Craniata</taxon>
        <taxon>Vertebrata</taxon>
        <taxon>Euteleostomi</taxon>
        <taxon>Mammalia</taxon>
        <taxon>Eutheria</taxon>
        <taxon>Laurasiatheria</taxon>
        <taxon>Carnivora</taxon>
        <taxon>Caniformia</taxon>
        <taxon>Canidae</taxon>
        <taxon>Canis</taxon>
    </lineage>
</organism>
<comment type="function">
    <text evidence="1">Involved in the detoxification of xenobiotics and in the activation of ester and amide prodrugs.</text>
</comment>
<comment type="catalytic activity">
    <reaction evidence="3">
        <text>a carboxylic ester + H2O = an alcohol + a carboxylate + H(+)</text>
        <dbReference type="Rhea" id="RHEA:21164"/>
        <dbReference type="ChEBI" id="CHEBI:15377"/>
        <dbReference type="ChEBI" id="CHEBI:15378"/>
        <dbReference type="ChEBI" id="CHEBI:29067"/>
        <dbReference type="ChEBI" id="CHEBI:30879"/>
        <dbReference type="ChEBI" id="CHEBI:33308"/>
        <dbReference type="EC" id="3.1.1.1"/>
    </reaction>
</comment>
<comment type="subcellular location">
    <subcellularLocation>
        <location evidence="1">Secreted</location>
    </subcellularLocation>
</comment>
<comment type="PTM">
    <text evidence="1">N-glycosylated.</text>
</comment>
<comment type="similarity">
    <text evidence="4">Belongs to the type-B carboxylesterase/lipase family.</text>
</comment>
<name>EST5A_CANLF</name>